<organism>
    <name type="scientific">Yersinia pseudotuberculosis serotype O:3 (strain YPIII)</name>
    <dbReference type="NCBI Taxonomy" id="502800"/>
    <lineage>
        <taxon>Bacteria</taxon>
        <taxon>Pseudomonadati</taxon>
        <taxon>Pseudomonadota</taxon>
        <taxon>Gammaproteobacteria</taxon>
        <taxon>Enterobacterales</taxon>
        <taxon>Yersiniaceae</taxon>
        <taxon>Yersinia</taxon>
    </lineage>
</organism>
<comment type="similarity">
    <text evidence="1">Belongs to the DsrB family.</text>
</comment>
<feature type="chain" id="PRO_1000146863" description="Protein DsrB">
    <location>
        <begin position="1"/>
        <end position="63"/>
    </location>
</feature>
<dbReference type="EMBL" id="CP000950">
    <property type="protein sequence ID" value="ACA68034.1"/>
    <property type="molecule type" value="Genomic_DNA"/>
</dbReference>
<dbReference type="RefSeq" id="WP_012303994.1">
    <property type="nucleotide sequence ID" value="NZ_CP009792.1"/>
</dbReference>
<dbReference type="SMR" id="B1JI88"/>
<dbReference type="KEGG" id="ypy:YPK_1741"/>
<dbReference type="PATRIC" id="fig|502800.11.peg.2405"/>
<dbReference type="HAMAP" id="MF_01549">
    <property type="entry name" value="DsrB"/>
    <property type="match status" value="1"/>
</dbReference>
<dbReference type="InterPro" id="IPR019717">
    <property type="entry name" value="Dextransucrase_DSRB"/>
</dbReference>
<dbReference type="NCBIfam" id="NF007981">
    <property type="entry name" value="PRK10708.1"/>
    <property type="match status" value="1"/>
</dbReference>
<dbReference type="Pfam" id="PF10781">
    <property type="entry name" value="DSRB"/>
    <property type="match status" value="1"/>
</dbReference>
<sequence length="63" mass="6969">MKVNDRVTVKTDGGPRREGVVLEVEEFSEGVMYLVSLADYPAGVWFFNEVDSQDGTFVGPLSQ</sequence>
<protein>
    <recommendedName>
        <fullName evidence="1">Protein DsrB</fullName>
    </recommendedName>
</protein>
<evidence type="ECO:0000255" key="1">
    <source>
        <dbReference type="HAMAP-Rule" id="MF_01549"/>
    </source>
</evidence>
<proteinExistence type="inferred from homology"/>
<accession>B1JI88</accession>
<name>DSRB_YERPY</name>
<reference key="1">
    <citation type="submission" date="2008-02" db="EMBL/GenBank/DDBJ databases">
        <title>Complete sequence of Yersinia pseudotuberculosis YPIII.</title>
        <authorList>
            <consortium name="US DOE Joint Genome Institute"/>
            <person name="Copeland A."/>
            <person name="Lucas S."/>
            <person name="Lapidus A."/>
            <person name="Glavina del Rio T."/>
            <person name="Dalin E."/>
            <person name="Tice H."/>
            <person name="Bruce D."/>
            <person name="Goodwin L."/>
            <person name="Pitluck S."/>
            <person name="Munk A.C."/>
            <person name="Brettin T."/>
            <person name="Detter J.C."/>
            <person name="Han C."/>
            <person name="Tapia R."/>
            <person name="Schmutz J."/>
            <person name="Larimer F."/>
            <person name="Land M."/>
            <person name="Hauser L."/>
            <person name="Challacombe J.F."/>
            <person name="Green L."/>
            <person name="Lindler L.E."/>
            <person name="Nikolich M.P."/>
            <person name="Richardson P."/>
        </authorList>
    </citation>
    <scope>NUCLEOTIDE SEQUENCE [LARGE SCALE GENOMIC DNA]</scope>
    <source>
        <strain>YPIII</strain>
    </source>
</reference>
<gene>
    <name evidence="1" type="primary">dsrB</name>
    <name type="ordered locus">YPK_1741</name>
</gene>